<reference key="1">
    <citation type="journal article" date="2010" name="Genome Biol. Evol.">
        <title>Continuing evolution of Burkholderia mallei through genome reduction and large-scale rearrangements.</title>
        <authorList>
            <person name="Losada L."/>
            <person name="Ronning C.M."/>
            <person name="DeShazer D."/>
            <person name="Woods D."/>
            <person name="Fedorova N."/>
            <person name="Kim H.S."/>
            <person name="Shabalina S.A."/>
            <person name="Pearson T.R."/>
            <person name="Brinkac L."/>
            <person name="Tan P."/>
            <person name="Nandi T."/>
            <person name="Crabtree J."/>
            <person name="Badger J."/>
            <person name="Beckstrom-Sternberg S."/>
            <person name="Saqib M."/>
            <person name="Schutzer S.E."/>
            <person name="Keim P."/>
            <person name="Nierman W.C."/>
        </authorList>
    </citation>
    <scope>NUCLEOTIDE SEQUENCE [LARGE SCALE GENOMIC DNA]</scope>
    <source>
        <strain>SAVP1</strain>
    </source>
</reference>
<comment type="similarity">
    <text evidence="3">Belongs to the UPF0758 family.</text>
</comment>
<feature type="chain" id="PRO_0000322674" description="UPF0758 protein BMASAVP1_A2646">
    <location>
        <begin position="1"/>
        <end position="278"/>
    </location>
</feature>
<feature type="domain" description="MPN" evidence="1">
    <location>
        <begin position="156"/>
        <end position="278"/>
    </location>
</feature>
<feature type="region of interest" description="Disordered" evidence="2">
    <location>
        <begin position="1"/>
        <end position="64"/>
    </location>
</feature>
<feature type="short sequence motif" description="JAMM motif" evidence="1">
    <location>
        <begin position="227"/>
        <end position="240"/>
    </location>
</feature>
<feature type="compositionally biased region" description="Low complexity" evidence="2">
    <location>
        <begin position="22"/>
        <end position="59"/>
    </location>
</feature>
<feature type="binding site" evidence="1">
    <location>
        <position position="227"/>
    </location>
    <ligand>
        <name>Zn(2+)</name>
        <dbReference type="ChEBI" id="CHEBI:29105"/>
        <note>catalytic</note>
    </ligand>
</feature>
<feature type="binding site" evidence="1">
    <location>
        <position position="229"/>
    </location>
    <ligand>
        <name>Zn(2+)</name>
        <dbReference type="ChEBI" id="CHEBI:29105"/>
        <note>catalytic</note>
    </ligand>
</feature>
<feature type="binding site" evidence="1">
    <location>
        <position position="240"/>
    </location>
    <ligand>
        <name>Zn(2+)</name>
        <dbReference type="ChEBI" id="CHEBI:29105"/>
        <note>catalytic</note>
    </ligand>
</feature>
<keyword id="KW-0378">Hydrolase</keyword>
<keyword id="KW-0479">Metal-binding</keyword>
<keyword id="KW-0482">Metalloprotease</keyword>
<keyword id="KW-0645">Protease</keyword>
<keyword id="KW-0862">Zinc</keyword>
<protein>
    <recommendedName>
        <fullName>UPF0758 protein BMASAVP1_A2646</fullName>
    </recommendedName>
</protein>
<proteinExistence type="inferred from homology"/>
<gene>
    <name type="ordered locus">BMASAVP1_A2646</name>
</gene>
<sequence>MQYEIVSAGEDVDDERARGRRAAAPAAPSSAVPSSAALSSAALSSAAQPTGAPPATAAARRGRDLPRERLLARGPAALSDAELVALLLGSGLPGHDVFALAHTLLARFGSLRALLDAAPDDFKGLRGIGPARTAILVAVVELARRALAEKARERPLVDSPGAVDDYLRLLIGTRPREVFVCLFLDARHRLVQTEETAHGSLTRMAVYPREIVRRALALNAAALIVAHNHPSGAVRPSAADRRLTRVLRDALALVDIKLIDHFVVGASDTFSFAQAGWI</sequence>
<accession>A1V6U0</accession>
<organism>
    <name type="scientific">Burkholderia mallei (strain SAVP1)</name>
    <dbReference type="NCBI Taxonomy" id="320388"/>
    <lineage>
        <taxon>Bacteria</taxon>
        <taxon>Pseudomonadati</taxon>
        <taxon>Pseudomonadota</taxon>
        <taxon>Betaproteobacteria</taxon>
        <taxon>Burkholderiales</taxon>
        <taxon>Burkholderiaceae</taxon>
        <taxon>Burkholderia</taxon>
        <taxon>pseudomallei group</taxon>
    </lineage>
</organism>
<evidence type="ECO:0000255" key="1">
    <source>
        <dbReference type="PROSITE-ProRule" id="PRU01182"/>
    </source>
</evidence>
<evidence type="ECO:0000256" key="2">
    <source>
        <dbReference type="SAM" id="MobiDB-lite"/>
    </source>
</evidence>
<evidence type="ECO:0000305" key="3"/>
<name>Y4446_BURMS</name>
<dbReference type="EMBL" id="CP000526">
    <property type="protein sequence ID" value="ABM50220.1"/>
    <property type="molecule type" value="Genomic_DNA"/>
</dbReference>
<dbReference type="SMR" id="A1V6U0"/>
<dbReference type="KEGG" id="bmv:BMASAVP1_A2646"/>
<dbReference type="HOGENOM" id="CLU_073529_0_1_4"/>
<dbReference type="GO" id="GO:0046872">
    <property type="term" value="F:metal ion binding"/>
    <property type="evidence" value="ECO:0007669"/>
    <property type="project" value="UniProtKB-KW"/>
</dbReference>
<dbReference type="GO" id="GO:0008237">
    <property type="term" value="F:metallopeptidase activity"/>
    <property type="evidence" value="ECO:0007669"/>
    <property type="project" value="UniProtKB-KW"/>
</dbReference>
<dbReference type="GO" id="GO:0006508">
    <property type="term" value="P:proteolysis"/>
    <property type="evidence" value="ECO:0007669"/>
    <property type="project" value="UniProtKB-KW"/>
</dbReference>
<dbReference type="CDD" id="cd08071">
    <property type="entry name" value="MPN_DUF2466"/>
    <property type="match status" value="1"/>
</dbReference>
<dbReference type="Gene3D" id="1.10.150.20">
    <property type="entry name" value="5' to 3' exonuclease, C-terminal subdomain"/>
    <property type="match status" value="1"/>
</dbReference>
<dbReference type="Gene3D" id="3.40.140.10">
    <property type="entry name" value="Cytidine Deaminase, domain 2"/>
    <property type="match status" value="1"/>
</dbReference>
<dbReference type="InterPro" id="IPR037518">
    <property type="entry name" value="MPN"/>
</dbReference>
<dbReference type="InterPro" id="IPR025657">
    <property type="entry name" value="RadC_JAB"/>
</dbReference>
<dbReference type="InterPro" id="IPR010994">
    <property type="entry name" value="RuvA_2-like"/>
</dbReference>
<dbReference type="InterPro" id="IPR001405">
    <property type="entry name" value="UPF0758"/>
</dbReference>
<dbReference type="InterPro" id="IPR020891">
    <property type="entry name" value="UPF0758_CS"/>
</dbReference>
<dbReference type="InterPro" id="IPR046778">
    <property type="entry name" value="UPF0758_N"/>
</dbReference>
<dbReference type="NCBIfam" id="NF000642">
    <property type="entry name" value="PRK00024.1"/>
    <property type="match status" value="1"/>
</dbReference>
<dbReference type="NCBIfam" id="TIGR00608">
    <property type="entry name" value="radc"/>
    <property type="match status" value="1"/>
</dbReference>
<dbReference type="PANTHER" id="PTHR30471">
    <property type="entry name" value="DNA REPAIR PROTEIN RADC"/>
    <property type="match status" value="1"/>
</dbReference>
<dbReference type="PANTHER" id="PTHR30471:SF3">
    <property type="entry name" value="UPF0758 PROTEIN YEES-RELATED"/>
    <property type="match status" value="1"/>
</dbReference>
<dbReference type="Pfam" id="PF04002">
    <property type="entry name" value="RadC"/>
    <property type="match status" value="1"/>
</dbReference>
<dbReference type="Pfam" id="PF20582">
    <property type="entry name" value="UPF0758_N"/>
    <property type="match status" value="1"/>
</dbReference>
<dbReference type="SUPFAM" id="SSF102712">
    <property type="entry name" value="JAB1/MPN domain"/>
    <property type="match status" value="1"/>
</dbReference>
<dbReference type="SUPFAM" id="SSF47781">
    <property type="entry name" value="RuvA domain 2-like"/>
    <property type="match status" value="1"/>
</dbReference>
<dbReference type="PROSITE" id="PS50249">
    <property type="entry name" value="MPN"/>
    <property type="match status" value="1"/>
</dbReference>
<dbReference type="PROSITE" id="PS01302">
    <property type="entry name" value="UPF0758"/>
    <property type="match status" value="1"/>
</dbReference>